<organism>
    <name type="scientific">Yersinia pestis</name>
    <dbReference type="NCBI Taxonomy" id="632"/>
    <lineage>
        <taxon>Bacteria</taxon>
        <taxon>Pseudomonadati</taxon>
        <taxon>Pseudomonadota</taxon>
        <taxon>Gammaproteobacteria</taxon>
        <taxon>Enterobacterales</taxon>
        <taxon>Yersiniaceae</taxon>
        <taxon>Yersinia</taxon>
    </lineage>
</organism>
<comment type="function">
    <text evidence="1">NDH-1 shuttles electrons from NADH, via FMN and iron-sulfur (Fe-S) centers, to quinones in the respiratory chain. The immediate electron acceptor for the enzyme in this species is believed to be ubiquinone. Couples the redox reaction to proton translocation (for every two electrons transferred, four hydrogen ions are translocated across the cytoplasmic membrane), and thus conserves the redox energy in a proton gradient (By similarity).</text>
</comment>
<comment type="catalytic activity">
    <reaction>
        <text>a quinone + NADH + 5 H(+)(in) = a quinol + NAD(+) + 4 H(+)(out)</text>
        <dbReference type="Rhea" id="RHEA:57888"/>
        <dbReference type="ChEBI" id="CHEBI:15378"/>
        <dbReference type="ChEBI" id="CHEBI:24646"/>
        <dbReference type="ChEBI" id="CHEBI:57540"/>
        <dbReference type="ChEBI" id="CHEBI:57945"/>
        <dbReference type="ChEBI" id="CHEBI:132124"/>
    </reaction>
</comment>
<comment type="cofactor">
    <cofactor evidence="1">
        <name>[2Fe-2S] cluster</name>
        <dbReference type="ChEBI" id="CHEBI:190135"/>
    </cofactor>
    <text evidence="1">Binds 1 [2Fe-2S] cluster per subunit.</text>
</comment>
<comment type="cofactor">
    <cofactor evidence="1">
        <name>[4Fe-4S] cluster</name>
        <dbReference type="ChEBI" id="CHEBI:49883"/>
    </cofactor>
    <text evidence="1">Binds 3 [4Fe-4S] clusters per subunit.</text>
</comment>
<comment type="subunit">
    <text>Composed of 13 different subunits. Subunits NuoCD, E, F, and G constitute the peripheral sector of the complex.</text>
</comment>
<comment type="similarity">
    <text evidence="6">Belongs to the complex I 75 kDa subunit family.</text>
</comment>
<dbReference type="EC" id="7.1.1.-"/>
<dbReference type="EMBL" id="AL590842">
    <property type="protein sequence ID" value="CAL21175.1"/>
    <property type="molecule type" value="Genomic_DNA"/>
</dbReference>
<dbReference type="EMBL" id="AE009952">
    <property type="protein sequence ID" value="AAM85204.1"/>
    <property type="molecule type" value="Genomic_DNA"/>
</dbReference>
<dbReference type="EMBL" id="AE017042">
    <property type="protein sequence ID" value="AAS62566.1"/>
    <property type="molecule type" value="Genomic_DNA"/>
</dbReference>
<dbReference type="PIR" id="AD0311">
    <property type="entry name" value="AD0311"/>
</dbReference>
<dbReference type="RefSeq" id="WP_002210275.1">
    <property type="nucleotide sequence ID" value="NZ_WUCM01000021.1"/>
</dbReference>
<dbReference type="RefSeq" id="YP_002347511.1">
    <property type="nucleotide sequence ID" value="NC_003143.1"/>
</dbReference>
<dbReference type="SMR" id="Q8ZDL2"/>
<dbReference type="STRING" id="214092.YPO2550"/>
<dbReference type="PaxDb" id="214092-YPO2550"/>
<dbReference type="DNASU" id="1146582"/>
<dbReference type="EnsemblBacteria" id="AAS62566">
    <property type="protein sequence ID" value="AAS62566"/>
    <property type="gene ID" value="YP_2361"/>
</dbReference>
<dbReference type="GeneID" id="57976139"/>
<dbReference type="KEGG" id="ype:YPO2550"/>
<dbReference type="KEGG" id="ypk:y1635"/>
<dbReference type="KEGG" id="ypm:YP_2361"/>
<dbReference type="PATRIC" id="fig|214092.21.peg.2974"/>
<dbReference type="eggNOG" id="COG1034">
    <property type="taxonomic scope" value="Bacteria"/>
</dbReference>
<dbReference type="HOGENOM" id="CLU_000422_11_4_6"/>
<dbReference type="OMA" id="GRIVMSC"/>
<dbReference type="OrthoDB" id="9810782at2"/>
<dbReference type="Proteomes" id="UP000000815">
    <property type="component" value="Chromosome"/>
</dbReference>
<dbReference type="Proteomes" id="UP000001019">
    <property type="component" value="Chromosome"/>
</dbReference>
<dbReference type="Proteomes" id="UP000002490">
    <property type="component" value="Chromosome"/>
</dbReference>
<dbReference type="GO" id="GO:0016020">
    <property type="term" value="C:membrane"/>
    <property type="evidence" value="ECO:0000318"/>
    <property type="project" value="GO_Central"/>
</dbReference>
<dbReference type="GO" id="GO:1990204">
    <property type="term" value="C:oxidoreductase complex"/>
    <property type="evidence" value="ECO:0007669"/>
    <property type="project" value="UniProtKB-ARBA"/>
</dbReference>
<dbReference type="GO" id="GO:0051537">
    <property type="term" value="F:2 iron, 2 sulfur cluster binding"/>
    <property type="evidence" value="ECO:0007669"/>
    <property type="project" value="UniProtKB-KW"/>
</dbReference>
<dbReference type="GO" id="GO:0051539">
    <property type="term" value="F:4 iron, 4 sulfur cluster binding"/>
    <property type="evidence" value="ECO:0007669"/>
    <property type="project" value="UniProtKB-KW"/>
</dbReference>
<dbReference type="GO" id="GO:0046872">
    <property type="term" value="F:metal ion binding"/>
    <property type="evidence" value="ECO:0007669"/>
    <property type="project" value="UniProtKB-KW"/>
</dbReference>
<dbReference type="GO" id="GO:0043546">
    <property type="term" value="F:molybdopterin cofactor binding"/>
    <property type="evidence" value="ECO:0007669"/>
    <property type="project" value="InterPro"/>
</dbReference>
<dbReference type="GO" id="GO:0008137">
    <property type="term" value="F:NADH dehydrogenase (ubiquinone) activity"/>
    <property type="evidence" value="ECO:0007669"/>
    <property type="project" value="InterPro"/>
</dbReference>
<dbReference type="GO" id="GO:0048038">
    <property type="term" value="F:quinone binding"/>
    <property type="evidence" value="ECO:0007669"/>
    <property type="project" value="UniProtKB-KW"/>
</dbReference>
<dbReference type="GO" id="GO:0042773">
    <property type="term" value="P:ATP synthesis coupled electron transport"/>
    <property type="evidence" value="ECO:0007669"/>
    <property type="project" value="InterPro"/>
</dbReference>
<dbReference type="GO" id="GO:0022904">
    <property type="term" value="P:respiratory electron transport chain"/>
    <property type="evidence" value="ECO:0000318"/>
    <property type="project" value="GO_Central"/>
</dbReference>
<dbReference type="CDD" id="cd00207">
    <property type="entry name" value="fer2"/>
    <property type="match status" value="1"/>
</dbReference>
<dbReference type="CDD" id="cd02788">
    <property type="entry name" value="MopB_CT_NDH-1_NuoG2-N7"/>
    <property type="match status" value="1"/>
</dbReference>
<dbReference type="CDD" id="cd02771">
    <property type="entry name" value="MopB_NDH-1_NuoG2-N7"/>
    <property type="match status" value="1"/>
</dbReference>
<dbReference type="FunFam" id="2.20.25.90:FF:000003">
    <property type="entry name" value="NADH-quinone oxidoreductase"/>
    <property type="match status" value="1"/>
</dbReference>
<dbReference type="FunFam" id="2.40.40.20:FF:000014">
    <property type="entry name" value="NADH-quinone oxidoreductase"/>
    <property type="match status" value="1"/>
</dbReference>
<dbReference type="FunFam" id="3.10.20.740:FF:000002">
    <property type="entry name" value="NADH-quinone oxidoreductase"/>
    <property type="match status" value="1"/>
</dbReference>
<dbReference type="FunFam" id="3.30.200.210:FF:000004">
    <property type="entry name" value="NADH-quinone oxidoreductase"/>
    <property type="match status" value="1"/>
</dbReference>
<dbReference type="FunFam" id="3.40.50.740:FF:000006">
    <property type="entry name" value="NADH-quinone oxidoreductase"/>
    <property type="match status" value="1"/>
</dbReference>
<dbReference type="Gene3D" id="2.40.40.20">
    <property type="match status" value="1"/>
</dbReference>
<dbReference type="Gene3D" id="3.10.20.740">
    <property type="match status" value="1"/>
</dbReference>
<dbReference type="Gene3D" id="3.30.200.210">
    <property type="match status" value="1"/>
</dbReference>
<dbReference type="Gene3D" id="3.40.50.740">
    <property type="match status" value="1"/>
</dbReference>
<dbReference type="InterPro" id="IPR036010">
    <property type="entry name" value="2Fe-2S_ferredoxin-like_sf"/>
</dbReference>
<dbReference type="InterPro" id="IPR001041">
    <property type="entry name" value="2Fe-2S_ferredoxin-type"/>
</dbReference>
<dbReference type="InterPro" id="IPR009010">
    <property type="entry name" value="Asp_de-COase-like_dom_sf"/>
</dbReference>
<dbReference type="InterPro" id="IPR006657">
    <property type="entry name" value="MoPterin_dinucl-bd_dom"/>
</dbReference>
<dbReference type="InterPro" id="IPR006656">
    <property type="entry name" value="Mopterin_OxRdtase"/>
</dbReference>
<dbReference type="InterPro" id="IPR006963">
    <property type="entry name" value="Mopterin_OxRdtase_4Fe-4S_dom"/>
</dbReference>
<dbReference type="InterPro" id="IPR000283">
    <property type="entry name" value="NADH_UbQ_OxRdtase_75kDa_su_CS"/>
</dbReference>
<dbReference type="InterPro" id="IPR054351">
    <property type="entry name" value="NADH_UbQ_OxRdtase_ferredoxin"/>
</dbReference>
<dbReference type="InterPro" id="IPR010228">
    <property type="entry name" value="NADH_UbQ_OxRdtase_Gsu"/>
</dbReference>
<dbReference type="InterPro" id="IPR019574">
    <property type="entry name" value="NADH_UbQ_OxRdtase_Gsu_4Fe4S-bd"/>
</dbReference>
<dbReference type="InterPro" id="IPR050123">
    <property type="entry name" value="Prok_molybdopt-oxidoreductase"/>
</dbReference>
<dbReference type="NCBIfam" id="TIGR01973">
    <property type="entry name" value="NuoG"/>
    <property type="match status" value="1"/>
</dbReference>
<dbReference type="PANTHER" id="PTHR43105:SF10">
    <property type="entry name" value="NADH-QUINONE OXIDOREDUCTASE SUBUNIT G"/>
    <property type="match status" value="1"/>
</dbReference>
<dbReference type="PANTHER" id="PTHR43105">
    <property type="entry name" value="RESPIRATORY NITRATE REDUCTASE"/>
    <property type="match status" value="1"/>
</dbReference>
<dbReference type="Pfam" id="PF13510">
    <property type="entry name" value="Fer2_4"/>
    <property type="match status" value="1"/>
</dbReference>
<dbReference type="Pfam" id="PF22117">
    <property type="entry name" value="Fer4_Nqo3"/>
    <property type="match status" value="1"/>
</dbReference>
<dbReference type="Pfam" id="PF04879">
    <property type="entry name" value="Molybdop_Fe4S4"/>
    <property type="match status" value="1"/>
</dbReference>
<dbReference type="Pfam" id="PF00384">
    <property type="entry name" value="Molybdopterin"/>
    <property type="match status" value="1"/>
</dbReference>
<dbReference type="Pfam" id="PF01568">
    <property type="entry name" value="Molydop_binding"/>
    <property type="match status" value="1"/>
</dbReference>
<dbReference type="Pfam" id="PF10588">
    <property type="entry name" value="NADH-G_4Fe-4S_3"/>
    <property type="match status" value="1"/>
</dbReference>
<dbReference type="SMART" id="SM00926">
    <property type="entry name" value="Molybdop_Fe4S4"/>
    <property type="match status" value="1"/>
</dbReference>
<dbReference type="SMART" id="SM00929">
    <property type="entry name" value="NADH-G_4Fe-4S_3"/>
    <property type="match status" value="1"/>
</dbReference>
<dbReference type="SUPFAM" id="SSF54292">
    <property type="entry name" value="2Fe-2S ferredoxin-like"/>
    <property type="match status" value="1"/>
</dbReference>
<dbReference type="SUPFAM" id="SSF54862">
    <property type="entry name" value="4Fe-4S ferredoxins"/>
    <property type="match status" value="1"/>
</dbReference>
<dbReference type="SUPFAM" id="SSF50692">
    <property type="entry name" value="ADC-like"/>
    <property type="match status" value="1"/>
</dbReference>
<dbReference type="SUPFAM" id="SSF53706">
    <property type="entry name" value="Formate dehydrogenase/DMSO reductase, domains 1-3"/>
    <property type="match status" value="1"/>
</dbReference>
<dbReference type="PROSITE" id="PS51085">
    <property type="entry name" value="2FE2S_FER_2"/>
    <property type="match status" value="1"/>
</dbReference>
<dbReference type="PROSITE" id="PS51839">
    <property type="entry name" value="4FE4S_HC3"/>
    <property type="match status" value="1"/>
</dbReference>
<dbReference type="PROSITE" id="PS51669">
    <property type="entry name" value="4FE4S_MOW_BIS_MGD"/>
    <property type="match status" value="1"/>
</dbReference>
<dbReference type="PROSITE" id="PS00641">
    <property type="entry name" value="COMPLEX1_75K_1"/>
    <property type="match status" value="1"/>
</dbReference>
<dbReference type="PROSITE" id="PS00642">
    <property type="entry name" value="COMPLEX1_75K_2"/>
    <property type="match status" value="1"/>
</dbReference>
<dbReference type="PROSITE" id="PS00643">
    <property type="entry name" value="COMPLEX1_75K_3"/>
    <property type="match status" value="1"/>
</dbReference>
<keyword id="KW-0001">2Fe-2S</keyword>
<keyword id="KW-0004">4Fe-4S</keyword>
<keyword id="KW-0408">Iron</keyword>
<keyword id="KW-0411">Iron-sulfur</keyword>
<keyword id="KW-0479">Metal-binding</keyword>
<keyword id="KW-0520">NAD</keyword>
<keyword id="KW-0874">Quinone</keyword>
<keyword id="KW-1185">Reference proteome</keyword>
<keyword id="KW-1278">Translocase</keyword>
<keyword id="KW-0830">Ubiquinone</keyword>
<evidence type="ECO:0000250" key="1"/>
<evidence type="ECO:0000255" key="2"/>
<evidence type="ECO:0000255" key="3">
    <source>
        <dbReference type="PROSITE-ProRule" id="PRU00465"/>
    </source>
</evidence>
<evidence type="ECO:0000255" key="4">
    <source>
        <dbReference type="PROSITE-ProRule" id="PRU01004"/>
    </source>
</evidence>
<evidence type="ECO:0000255" key="5">
    <source>
        <dbReference type="PROSITE-ProRule" id="PRU01184"/>
    </source>
</evidence>
<evidence type="ECO:0000305" key="6"/>
<sequence>MATIHVDGKEYDVNGADNLLQACLSLGLDIPYFCWHPALGSVGACRQCAVKQYQNADDTRGRLVMSCMTPATDGTFISIDDSEAKAFRESVVEWLMTNHPHDCPVCEEGGNCHLQDMTVMTGHSFRRYRFTKRTHQNQDLGPFISHEMNRCIACYRCVRYYKDYADGTDLGVYGAHDNVYFGRTESGTLESEFSGNLVEVCPTGVFTDKTHSERYNRKWDMQFAPSICQQCSVGCNTSPGERYGELRRIENRYNGSVNHYFMCDRGRFGYGYVNLKDRPRQPQQLRGSDWIHLNADQVMQGAADILRQAKKTIGIGSPRASLESNFALRELVGAENFYTGIAAGEQQRLQLMLKVLREGGIYTPALREIESYDAVLILGEDLTQTGARIALSVRQAVKGKAREMAAAQKVADWQIAAIMNIGQHAKHPLFITNVDNTRMDDIAAWNYRAPVDDQARLGFAIAHALDESAPAVADLDRSLKGKVDIIVQALAGAKKPLIITGSSAGSDAIIEAAANVAKALKNRGSDVGITFVASAANSIGLSMIGGGSLDQALELLTRGEADSAIVMENDLYRHAAKDKVDAALDNVANLIVVDHQRTAIMDKANLILSAASFAESDGTLVNQEGRAQRFFQVYDPTYYDDPKKPESRSIMLESWRWLHSLHSTYTSRHVDWTQLDHVIAACVEALPQLQGIVEAAPDATFRIRGQRLARSPHRYSGRTAMRADISVHEPRQPQDIDTPFSFSMEGNNSPLADRQQIPFAWAPGWNSPQAWNKFQAEVGGSLRFGDPGVRLIEAGEGTLDYFDSIPAAFTATAGNWQIAPYYHLFGSEEMSQRSDVIQQRMPTPYVMVNPADAAALGVNLGTLVEFNCAGQTLRLPVRLSDTLAPGQVGLPLGLPGIPPILVGARVEDLREAVQ</sequence>
<name>NUOG_YERPE</name>
<proteinExistence type="inferred from homology"/>
<gene>
    <name type="primary">nuoG</name>
    <name type="ordered locus">YPO2550</name>
    <name type="ordered locus">y1635</name>
    <name type="ordered locus">YP_2361</name>
</gene>
<reference key="1">
    <citation type="journal article" date="2001" name="Nature">
        <title>Genome sequence of Yersinia pestis, the causative agent of plague.</title>
        <authorList>
            <person name="Parkhill J."/>
            <person name="Wren B.W."/>
            <person name="Thomson N.R."/>
            <person name="Titball R.W."/>
            <person name="Holden M.T.G."/>
            <person name="Prentice M.B."/>
            <person name="Sebaihia M."/>
            <person name="James K.D."/>
            <person name="Churcher C.M."/>
            <person name="Mungall K.L."/>
            <person name="Baker S."/>
            <person name="Basham D."/>
            <person name="Bentley S.D."/>
            <person name="Brooks K."/>
            <person name="Cerdeno-Tarraga A.-M."/>
            <person name="Chillingworth T."/>
            <person name="Cronin A."/>
            <person name="Davies R.M."/>
            <person name="Davis P."/>
            <person name="Dougan G."/>
            <person name="Feltwell T."/>
            <person name="Hamlin N."/>
            <person name="Holroyd S."/>
            <person name="Jagels K."/>
            <person name="Karlyshev A.V."/>
            <person name="Leather S."/>
            <person name="Moule S."/>
            <person name="Oyston P.C.F."/>
            <person name="Quail M.A."/>
            <person name="Rutherford K.M."/>
            <person name="Simmonds M."/>
            <person name="Skelton J."/>
            <person name="Stevens K."/>
            <person name="Whitehead S."/>
            <person name="Barrell B.G."/>
        </authorList>
    </citation>
    <scope>NUCLEOTIDE SEQUENCE [LARGE SCALE GENOMIC DNA]</scope>
    <source>
        <strain>CO-92 / Biovar Orientalis</strain>
    </source>
</reference>
<reference key="2">
    <citation type="journal article" date="2002" name="J. Bacteriol.">
        <title>Genome sequence of Yersinia pestis KIM.</title>
        <authorList>
            <person name="Deng W."/>
            <person name="Burland V."/>
            <person name="Plunkett G. III"/>
            <person name="Boutin A."/>
            <person name="Mayhew G.F."/>
            <person name="Liss P."/>
            <person name="Perna N.T."/>
            <person name="Rose D.J."/>
            <person name="Mau B."/>
            <person name="Zhou S."/>
            <person name="Schwartz D.C."/>
            <person name="Fetherston J.D."/>
            <person name="Lindler L.E."/>
            <person name="Brubaker R.R."/>
            <person name="Plano G.V."/>
            <person name="Straley S.C."/>
            <person name="McDonough K.A."/>
            <person name="Nilles M.L."/>
            <person name="Matson J.S."/>
            <person name="Blattner F.R."/>
            <person name="Perry R.D."/>
        </authorList>
    </citation>
    <scope>NUCLEOTIDE SEQUENCE [LARGE SCALE GENOMIC DNA]</scope>
    <source>
        <strain>KIM10+ / Biovar Mediaevalis</strain>
    </source>
</reference>
<reference key="3">
    <citation type="journal article" date="2004" name="DNA Res.">
        <title>Complete genome sequence of Yersinia pestis strain 91001, an isolate avirulent to humans.</title>
        <authorList>
            <person name="Song Y."/>
            <person name="Tong Z."/>
            <person name="Wang J."/>
            <person name="Wang L."/>
            <person name="Guo Z."/>
            <person name="Han Y."/>
            <person name="Zhang J."/>
            <person name="Pei D."/>
            <person name="Zhou D."/>
            <person name="Qin H."/>
            <person name="Pang X."/>
            <person name="Han Y."/>
            <person name="Zhai J."/>
            <person name="Li M."/>
            <person name="Cui B."/>
            <person name="Qi Z."/>
            <person name="Jin L."/>
            <person name="Dai R."/>
            <person name="Chen F."/>
            <person name="Li S."/>
            <person name="Ye C."/>
            <person name="Du Z."/>
            <person name="Lin W."/>
            <person name="Wang J."/>
            <person name="Yu J."/>
            <person name="Yang H."/>
            <person name="Wang J."/>
            <person name="Huang P."/>
            <person name="Yang R."/>
        </authorList>
    </citation>
    <scope>NUCLEOTIDE SEQUENCE [LARGE SCALE GENOMIC DNA]</scope>
    <source>
        <strain>91001 / Biovar Mediaevalis</strain>
    </source>
</reference>
<feature type="chain" id="PRO_0000118557" description="NADH-quinone oxidoreductase subunit G">
    <location>
        <begin position="1"/>
        <end position="914"/>
    </location>
</feature>
<feature type="domain" description="2Fe-2S ferredoxin-type" evidence="3">
    <location>
        <begin position="1"/>
        <end position="83"/>
    </location>
</feature>
<feature type="domain" description="4Fe-4S His(Cys)3-ligated-type" evidence="5">
    <location>
        <begin position="83"/>
        <end position="122"/>
    </location>
</feature>
<feature type="domain" description="4Fe-4S Mo/W bis-MGD-type" evidence="4">
    <location>
        <begin position="221"/>
        <end position="277"/>
    </location>
</feature>
<feature type="binding site" evidence="1">
    <location>
        <position position="34"/>
    </location>
    <ligand>
        <name>[2Fe-2S] cluster</name>
        <dbReference type="ChEBI" id="CHEBI:190135"/>
    </ligand>
</feature>
<feature type="binding site" evidence="1">
    <location>
        <position position="45"/>
    </location>
    <ligand>
        <name>[2Fe-2S] cluster</name>
        <dbReference type="ChEBI" id="CHEBI:190135"/>
    </ligand>
</feature>
<feature type="binding site" evidence="1">
    <location>
        <position position="48"/>
    </location>
    <ligand>
        <name>[2Fe-2S] cluster</name>
        <dbReference type="ChEBI" id="CHEBI:190135"/>
    </ligand>
</feature>
<feature type="binding site" evidence="1">
    <location>
        <position position="67"/>
    </location>
    <ligand>
        <name>[2Fe-2S] cluster</name>
        <dbReference type="ChEBI" id="CHEBI:190135"/>
    </ligand>
</feature>
<feature type="binding site" evidence="5">
    <location>
        <position position="99"/>
    </location>
    <ligand>
        <name>[4Fe-4S] cluster</name>
        <dbReference type="ChEBI" id="CHEBI:49883"/>
        <label>1</label>
    </ligand>
</feature>
<feature type="binding site" evidence="5">
    <location>
        <position position="103"/>
    </location>
    <ligand>
        <name>[4Fe-4S] cluster</name>
        <dbReference type="ChEBI" id="CHEBI:49883"/>
        <label>1</label>
    </ligand>
</feature>
<feature type="binding site" evidence="5">
    <location>
        <position position="106"/>
    </location>
    <ligand>
        <name>[4Fe-4S] cluster</name>
        <dbReference type="ChEBI" id="CHEBI:49883"/>
        <label>1</label>
    </ligand>
</feature>
<feature type="binding site" evidence="5">
    <location>
        <position position="112"/>
    </location>
    <ligand>
        <name>[4Fe-4S] cluster</name>
        <dbReference type="ChEBI" id="CHEBI:49883"/>
        <label>1</label>
    </ligand>
</feature>
<feature type="binding site" evidence="1">
    <location>
        <position position="151"/>
    </location>
    <ligand>
        <name>[4Fe-4S] cluster</name>
        <dbReference type="ChEBI" id="CHEBI:49883"/>
        <label>2</label>
    </ligand>
</feature>
<feature type="binding site" evidence="1">
    <location>
        <position position="154"/>
    </location>
    <ligand>
        <name>[4Fe-4S] cluster</name>
        <dbReference type="ChEBI" id="CHEBI:49883"/>
        <label>2</label>
    </ligand>
</feature>
<feature type="binding site" evidence="1">
    <location>
        <position position="157"/>
    </location>
    <ligand>
        <name>[4Fe-4S] cluster</name>
        <dbReference type="ChEBI" id="CHEBI:49883"/>
        <label>2</label>
    </ligand>
</feature>
<feature type="binding site" evidence="1">
    <location>
        <position position="201"/>
    </location>
    <ligand>
        <name>[4Fe-4S] cluster</name>
        <dbReference type="ChEBI" id="CHEBI:49883"/>
        <label>2</label>
    </ligand>
</feature>
<feature type="binding site" evidence="2">
    <location>
        <position position="228"/>
    </location>
    <ligand>
        <name>[4Fe-4S] cluster</name>
        <dbReference type="ChEBI" id="CHEBI:49883"/>
        <label>3</label>
    </ligand>
</feature>
<feature type="binding site" evidence="2">
    <location>
        <position position="231"/>
    </location>
    <ligand>
        <name>[4Fe-4S] cluster</name>
        <dbReference type="ChEBI" id="CHEBI:49883"/>
        <label>3</label>
    </ligand>
</feature>
<feature type="binding site" evidence="2">
    <location>
        <position position="235"/>
    </location>
    <ligand>
        <name>[4Fe-4S] cluster</name>
        <dbReference type="ChEBI" id="CHEBI:49883"/>
        <label>3</label>
    </ligand>
</feature>
<feature type="binding site" evidence="2">
    <location>
        <position position="263"/>
    </location>
    <ligand>
        <name>[4Fe-4S] cluster</name>
        <dbReference type="ChEBI" id="CHEBI:49883"/>
        <label>3</label>
    </ligand>
</feature>
<accession>Q8ZDL2</accession>
<accession>Q0WDX7</accession>
<protein>
    <recommendedName>
        <fullName>NADH-quinone oxidoreductase subunit G</fullName>
        <ecNumber>7.1.1.-</ecNumber>
    </recommendedName>
    <alternativeName>
        <fullName>NADH dehydrogenase I subunit G</fullName>
    </alternativeName>
    <alternativeName>
        <fullName>NDH-1 subunit G</fullName>
    </alternativeName>
</protein>